<evidence type="ECO:0000255" key="1"/>
<evidence type="ECO:0000256" key="2">
    <source>
        <dbReference type="SAM" id="MobiDB-lite"/>
    </source>
</evidence>
<evidence type="ECO:0000269" key="3">
    <source>
    </source>
</evidence>
<evidence type="ECO:0000269" key="4">
    <source>
    </source>
</evidence>
<evidence type="ECO:0000269" key="5">
    <source>
    </source>
</evidence>
<evidence type="ECO:0000305" key="6"/>
<sequence>MSFLKKSLLLILFLGLVSLSVCKEEKRETEEENENEENHEEGSEMKRYMFHLMDGEAKKRDSEENEIEENHEEGSEMKRYAFGYPSGEAKKIKRVSEEENENEENHEEGSEMKRYAFGYPSGEAKKIKRESEEEKEIEENHEEGSEMKRYAFGYPSGEAKKIKRESEEENENEENHEEGSEMKRYAFGYPSGEAKKM</sequence>
<comment type="function">
    <text>Dermorphin has a very potent opiate-like activity. It has high affinity and selectivity for mu-type opioid receptors.</text>
</comment>
<comment type="function">
    <text>Deltorphin has a very potent opiate-like activity. It has high affinity and selectivity for delta-type opioid receptors.</text>
</comment>
<comment type="subcellular location">
    <subcellularLocation>
        <location>Secreted</location>
    </subcellularLocation>
</comment>
<comment type="tissue specificity">
    <text evidence="5">Expressed by the skin glands.</text>
</comment>
<comment type="similarity">
    <text evidence="6">Belongs to the frog skin active peptide (FSAP) family. Dermorphin subfamily.</text>
</comment>
<organism>
    <name type="scientific">Phyllomedusa sauvagei</name>
    <name type="common">Sauvage's leaf frog</name>
    <dbReference type="NCBI Taxonomy" id="8395"/>
    <lineage>
        <taxon>Eukaryota</taxon>
        <taxon>Metazoa</taxon>
        <taxon>Chordata</taxon>
        <taxon>Craniata</taxon>
        <taxon>Vertebrata</taxon>
        <taxon>Euteleostomi</taxon>
        <taxon>Amphibia</taxon>
        <taxon>Batrachia</taxon>
        <taxon>Anura</taxon>
        <taxon>Neobatrachia</taxon>
        <taxon>Hyloidea</taxon>
        <taxon>Hylidae</taxon>
        <taxon>Phyllomedusinae</taxon>
        <taxon>Phyllomedusa</taxon>
    </lineage>
</organism>
<accession>P05422</accession>
<reference key="1">
    <citation type="journal article" date="1987" name="Science">
        <title>D-alanine in the frog skin peptide dermorphin is derived from L-alanine in the precursor.</title>
        <authorList>
            <person name="Richter K."/>
            <person name="Egger R."/>
            <person name="Kreil G."/>
        </authorList>
    </citation>
    <scope>NUCLEOTIDE SEQUENCE [MRNA]</scope>
    <source>
        <tissue>Skin</tissue>
    </source>
</reference>
<reference key="2">
    <citation type="journal article" date="1991" name="J. Biol. Chem.">
        <title>Identification of a D-alanine-containing polypeptide precursor for the peptide opioid, dermorphin.</title>
        <authorList>
            <person name="Mor A."/>
            <person name="Delfaour A."/>
            <person name="Nicolas P."/>
        </authorList>
    </citation>
    <scope>PROTEIN SEQUENCE OF 48-54; 99-111 AND 115-126</scope>
    <scope>D-AMINO ACID AT MET-49</scope>
    <scope>AMIDATION AT ASP-54</scope>
    <source>
        <tissue>Skin secretion</tissue>
    </source>
</reference>
<reference key="3">
    <citation type="journal article" date="1989" name="Eur. J. Pharmacol.">
        <title>Deltorphin, a novel amphibian skin peptide with high selectivity and affinity for delta opioid receptors.</title>
        <authorList>
            <person name="Kreil G."/>
            <person name="Barra D."/>
            <person name="Simmaco M."/>
            <person name="Erspamer V."/>
            <person name="Erspamer G.F."/>
            <person name="Negri L."/>
            <person name="Severini C."/>
            <person name="Corsi R."/>
            <person name="Melchiorri P."/>
        </authorList>
    </citation>
    <scope>PROTEIN SEQUENCE OF 48-54</scope>
    <scope>D-AMINO ACID AT MET-49</scope>
    <scope>AMIDATION AT ASP-54</scope>
    <scope>FUNCTION</scope>
    <source>
        <tissue>Skin secretion</tissue>
    </source>
</reference>
<reference key="4">
    <citation type="journal article" date="1981" name="Int. J. Pept. Protein Res.">
        <title>Amino acid composition and sequence of dermorphin, a novel opiate-like peptide from the skin of Phyllomedusa sauvagei.</title>
        <authorList>
            <person name="Montecucchi P.C."/>
            <person name="de Castiglione R."/>
            <person name="Piani S."/>
            <person name="Gozzini L."/>
            <person name="Erspamer V."/>
        </authorList>
    </citation>
    <scope>PROTEIN SEQUENCE OF 80-86; 115-121; 150-156 AND 185-191</scope>
    <scope>D-AMINO ACID AT ALA-81; ALA-116; ALA-151 AND ALA-186</scope>
    <scope>AMIDATION AT SER-86; SER-121; SER-156 AND SER-191</scope>
    <scope>FUNCTION</scope>
    <scope>TISSUE SPECIFICITY</scope>
    <source>
        <tissue>Skin secretion</tissue>
    </source>
</reference>
<feature type="signal peptide" evidence="1">
    <location>
        <begin position="1"/>
        <end position="20"/>
    </location>
</feature>
<feature type="propeptide" id="PRO_0000010233">
    <location>
        <begin position="21"/>
        <end position="45"/>
    </location>
</feature>
<feature type="peptide" id="PRO_0000010234" description="Deltorphin">
    <location>
        <begin position="48"/>
        <end position="54"/>
    </location>
</feature>
<feature type="propeptide" id="PRO_0000010235">
    <location>
        <begin position="56"/>
        <end position="77"/>
    </location>
</feature>
<feature type="peptide" id="PRO_0000010236" description="Dermorphin">
    <location>
        <begin position="80"/>
        <end position="86"/>
    </location>
</feature>
<feature type="propeptide" id="PRO_0000010237">
    <location>
        <begin position="88"/>
        <end position="112"/>
    </location>
</feature>
<feature type="peptide" id="PRO_0000010238" description="Dermorphin">
    <location>
        <begin position="115"/>
        <end position="121"/>
    </location>
</feature>
<feature type="propeptide" id="PRO_0000010239">
    <location>
        <begin position="123"/>
        <end position="147"/>
    </location>
</feature>
<feature type="peptide" id="PRO_0000010240" description="Dermorphin">
    <location>
        <begin position="150"/>
        <end position="156"/>
    </location>
</feature>
<feature type="propeptide" id="PRO_0000010241">
    <location>
        <begin position="158"/>
        <end position="182"/>
    </location>
</feature>
<feature type="peptide" id="PRO_0000010242" description="Dermorphin">
    <location>
        <begin position="185"/>
        <end position="191"/>
    </location>
</feature>
<feature type="propeptide" id="PRO_0000010243">
    <location>
        <begin position="193"/>
        <end position="197"/>
    </location>
</feature>
<feature type="region of interest" description="Disordered" evidence="2">
    <location>
        <begin position="24"/>
        <end position="197"/>
    </location>
</feature>
<feature type="compositionally biased region" description="Acidic residues" evidence="2">
    <location>
        <begin position="30"/>
        <end position="39"/>
    </location>
</feature>
<feature type="compositionally biased region" description="Basic and acidic residues" evidence="2">
    <location>
        <begin position="40"/>
        <end position="62"/>
    </location>
</feature>
<feature type="compositionally biased region" description="Basic and acidic residues" evidence="2">
    <location>
        <begin position="88"/>
        <end position="97"/>
    </location>
</feature>
<feature type="compositionally biased region" description="Basic and acidic residues" evidence="2">
    <location>
        <begin position="123"/>
        <end position="132"/>
    </location>
</feature>
<feature type="compositionally biased region" description="Acidic residues" evidence="2">
    <location>
        <begin position="167"/>
        <end position="176"/>
    </location>
</feature>
<feature type="modified residue" description="D-methionine" evidence="3 4">
    <location>
        <position position="49"/>
    </location>
</feature>
<feature type="modified residue" description="Aspartic acid 1-amide" evidence="3 4">
    <location>
        <position position="54"/>
    </location>
</feature>
<feature type="modified residue" description="D-alanine (Ala)" evidence="5">
    <location>
        <position position="81"/>
    </location>
</feature>
<feature type="modified residue" description="Serine amide" evidence="5">
    <location>
        <position position="86"/>
    </location>
</feature>
<feature type="modified residue" description="D-alanine (Ala)" evidence="5">
    <location>
        <position position="116"/>
    </location>
</feature>
<feature type="modified residue" description="Serine amide" evidence="5">
    <location>
        <position position="121"/>
    </location>
</feature>
<feature type="modified residue" description="D-alanine (Ala)" evidence="5">
    <location>
        <position position="151"/>
    </location>
</feature>
<feature type="modified residue" description="Serine amide" evidence="5">
    <location>
        <position position="156"/>
    </location>
</feature>
<feature type="modified residue" description="D-alanine (Ala)" evidence="5">
    <location>
        <position position="186"/>
    </location>
</feature>
<feature type="modified residue" description="Serine amide" evidence="5">
    <location>
        <position position="191"/>
    </location>
</feature>
<keyword id="KW-0027">Amidation</keyword>
<keyword id="KW-0878">Amphibian defense peptide</keyword>
<keyword id="KW-0165">Cleavage on pair of basic residues</keyword>
<keyword id="KW-0208">D-amino acid</keyword>
<keyword id="KW-0903">Direct protein sequencing</keyword>
<keyword id="KW-0257">Endorphin</keyword>
<keyword id="KW-0555">Opioid peptide</keyword>
<keyword id="KW-0677">Repeat</keyword>
<keyword id="KW-0964">Secreted</keyword>
<keyword id="KW-0732">Signal</keyword>
<proteinExistence type="evidence at protein level"/>
<dbReference type="EMBL" id="M18031">
    <property type="protein sequence ID" value="AAA49453.1"/>
    <property type="molecule type" value="mRNA"/>
</dbReference>
<dbReference type="PIR" id="A27784">
    <property type="entry name" value="A27784"/>
</dbReference>
<dbReference type="GO" id="GO:0005576">
    <property type="term" value="C:extracellular region"/>
    <property type="evidence" value="ECO:0000314"/>
    <property type="project" value="UniProtKB"/>
</dbReference>
<dbReference type="GO" id="GO:0001515">
    <property type="term" value="F:opioid peptide activity"/>
    <property type="evidence" value="ECO:0000314"/>
    <property type="project" value="UniProtKB"/>
</dbReference>
<dbReference type="GO" id="GO:0006952">
    <property type="term" value="P:defense response"/>
    <property type="evidence" value="ECO:0000314"/>
    <property type="project" value="UniProtKB"/>
</dbReference>
<dbReference type="GO" id="GO:0007218">
    <property type="term" value="P:neuropeptide signaling pathway"/>
    <property type="evidence" value="ECO:0000314"/>
    <property type="project" value="UniProtKB"/>
</dbReference>
<dbReference type="InterPro" id="IPR004275">
    <property type="entry name" value="Frog_antimicrobial_propeptide"/>
</dbReference>
<dbReference type="Pfam" id="PF03032">
    <property type="entry name" value="FSAP_sig_propep"/>
    <property type="match status" value="1"/>
</dbReference>
<name>DEM1_PHYSA</name>
<protein>
    <recommendedName>
        <fullName>Dermorphin-1</fullName>
    </recommendedName>
    <component>
        <recommendedName>
            <fullName>Deltorphin</fullName>
        </recommendedName>
        <alternativeName>
            <fullName>Dermenkephalin</fullName>
        </alternativeName>
    </component>
    <component>
        <recommendedName>
            <fullName>Dermorphin</fullName>
        </recommendedName>
    </component>
</protein>